<name>PSA6_DROME</name>
<dbReference type="EMBL" id="AF144749">
    <property type="protein sequence ID" value="AAD33944.1"/>
    <property type="molecule type" value="mRNA"/>
</dbReference>
<dbReference type="EMBL" id="AE013599">
    <property type="protein sequence ID" value="AAF59183.1"/>
    <property type="molecule type" value="Genomic_DNA"/>
</dbReference>
<dbReference type="EMBL" id="AY118637">
    <property type="protein sequence ID" value="AAM50006.1"/>
    <property type="molecule type" value="mRNA"/>
</dbReference>
<dbReference type="RefSeq" id="NP_524837.2">
    <property type="nucleotide sequence ID" value="NM_080098.4"/>
</dbReference>
<dbReference type="RefSeq" id="NP_724614.1">
    <property type="nucleotide sequence ID" value="NM_165565.3"/>
</dbReference>
<dbReference type="SMR" id="Q9XZJ4"/>
<dbReference type="BioGRID" id="69878">
    <property type="interactions" value="52"/>
</dbReference>
<dbReference type="BioGRID" id="73141">
    <property type="interactions" value="7"/>
</dbReference>
<dbReference type="ComplexPortal" id="CPX-9070">
    <property type="entry name" value="26S proteasome complex"/>
</dbReference>
<dbReference type="ComplexPortal" id="CPX-9087">
    <property type="entry name" value="26S proteasome complex, testis-specific variant"/>
</dbReference>
<dbReference type="FunCoup" id="Q9XZJ4">
    <property type="interactions" value="1504"/>
</dbReference>
<dbReference type="IntAct" id="Q9XZJ4">
    <property type="interactions" value="88"/>
</dbReference>
<dbReference type="STRING" id="7227.FBpp0087968"/>
<dbReference type="MEROPS" id="T01.971"/>
<dbReference type="GlyGen" id="Q9XZJ4">
    <property type="glycosylation" value="1 site, 1 O-linked glycan (1 site)"/>
</dbReference>
<dbReference type="PaxDb" id="7227-FBpp0087969"/>
<dbReference type="DNASU" id="246582"/>
<dbReference type="EnsemblMetazoa" id="FBtr0088894">
    <property type="protein sequence ID" value="FBpp0087968"/>
    <property type="gene ID" value="FBgn0050382"/>
</dbReference>
<dbReference type="EnsemblMetazoa" id="FBtr0088895">
    <property type="protein sequence ID" value="FBpp0087969"/>
    <property type="gene ID" value="FBgn0263121"/>
</dbReference>
<dbReference type="EnsemblMetazoa" id="FBtr0088896">
    <property type="protein sequence ID" value="FBpp0087970"/>
    <property type="gene ID" value="FBgn0263121"/>
</dbReference>
<dbReference type="EnsemblMetazoa" id="FBtr0302223">
    <property type="protein sequence ID" value="FBpp0291433"/>
    <property type="gene ID" value="FBgn0050382"/>
</dbReference>
<dbReference type="GeneID" id="246582"/>
<dbReference type="GeneID" id="45780"/>
<dbReference type="KEGG" id="dme:Dmel_CG18495"/>
<dbReference type="KEGG" id="dme:Dmel_CG30382"/>
<dbReference type="AGR" id="FB:FBgn0263121"/>
<dbReference type="CTD" id="246582"/>
<dbReference type="CTD" id="45780"/>
<dbReference type="FlyBase" id="FBgn0263121">
    <property type="gene designation" value="Prosalpha1"/>
</dbReference>
<dbReference type="VEuPathDB" id="VectorBase:FBgn0050382"/>
<dbReference type="VEuPathDB" id="VectorBase:FBgn0263121"/>
<dbReference type="eggNOG" id="KOG0182">
    <property type="taxonomic scope" value="Eukaryota"/>
</dbReference>
<dbReference type="GeneTree" id="ENSGT00550000074807"/>
<dbReference type="HOGENOM" id="CLU_035750_4_1_1"/>
<dbReference type="InParanoid" id="Q9XZJ4"/>
<dbReference type="OMA" id="YGYDMPV"/>
<dbReference type="OrthoDB" id="5835702at2759"/>
<dbReference type="PhylomeDB" id="Q9XZJ4"/>
<dbReference type="Reactome" id="R-DME-1169091">
    <property type="pathway name" value="Activation of NF-kappaB in B cells"/>
</dbReference>
<dbReference type="Reactome" id="R-DME-1234176">
    <property type="pathway name" value="Oxygen-dependent proline hydroxylation of Hypoxia-inducible Factor Alpha"/>
</dbReference>
<dbReference type="Reactome" id="R-DME-1236978">
    <property type="pathway name" value="Cross-presentation of soluble exogenous antigens (endosomes)"/>
</dbReference>
<dbReference type="Reactome" id="R-DME-174084">
    <property type="pathway name" value="Autodegradation of Cdh1 by Cdh1:APC/C"/>
</dbReference>
<dbReference type="Reactome" id="R-DME-174154">
    <property type="pathway name" value="APC/C:Cdc20 mediated degradation of Securin"/>
</dbReference>
<dbReference type="Reactome" id="R-DME-174178">
    <property type="pathway name" value="APC/C:Cdh1 mediated degradation of Cdc20 and other APC/C:Cdh1 targeted proteins in late mitosis/early G1"/>
</dbReference>
<dbReference type="Reactome" id="R-DME-174184">
    <property type="pathway name" value="Cdc20:Phospho-APC/C mediated degradation of Cyclin A"/>
</dbReference>
<dbReference type="Reactome" id="R-DME-187577">
    <property type="pathway name" value="SCF(Skp2)-mediated degradation of p27/p21"/>
</dbReference>
<dbReference type="Reactome" id="R-DME-195253">
    <property type="pathway name" value="Degradation of beta-catenin by the destruction complex"/>
</dbReference>
<dbReference type="Reactome" id="R-DME-202424">
    <property type="pathway name" value="Downstream TCR signaling"/>
</dbReference>
<dbReference type="Reactome" id="R-DME-209360">
    <property type="pathway name" value="Ubiquitination and proteolysis of phosphorylated CI"/>
</dbReference>
<dbReference type="Reactome" id="R-DME-209406">
    <property type="pathway name" value="Degradation of NF-kappa-B inhibitor, CACT"/>
</dbReference>
<dbReference type="Reactome" id="R-DME-209461">
    <property type="pathway name" value="Ubiquitination and degradation of phosphorylated ARM"/>
</dbReference>
<dbReference type="Reactome" id="R-DME-216167">
    <property type="pathway name" value="Nuclear CI is degraded"/>
</dbReference>
<dbReference type="Reactome" id="R-DME-2467813">
    <property type="pathway name" value="Separation of Sister Chromatids"/>
</dbReference>
<dbReference type="Reactome" id="R-DME-2871837">
    <property type="pathway name" value="FCERI mediated NF-kB activation"/>
</dbReference>
<dbReference type="Reactome" id="R-DME-350562">
    <property type="pathway name" value="Regulation of ornithine decarboxylase (ODC)"/>
</dbReference>
<dbReference type="Reactome" id="R-DME-382556">
    <property type="pathway name" value="ABC-family proteins mediated transport"/>
</dbReference>
<dbReference type="Reactome" id="R-DME-432395">
    <property type="pathway name" value="Degradation of TIM"/>
</dbReference>
<dbReference type="Reactome" id="R-DME-432524">
    <property type="pathway name" value="Degradation of PER"/>
</dbReference>
<dbReference type="Reactome" id="R-DME-432626">
    <property type="pathway name" value="Circadian Clock pathway"/>
</dbReference>
<dbReference type="Reactome" id="R-DME-450408">
    <property type="pathway name" value="AUF1 (hnRNP D0) binds and destabilizes mRNA"/>
</dbReference>
<dbReference type="Reactome" id="R-DME-4608870">
    <property type="pathway name" value="Asymmetric localization of PCP proteins"/>
</dbReference>
<dbReference type="Reactome" id="R-DME-4641257">
    <property type="pathway name" value="Degradation of AXIN"/>
</dbReference>
<dbReference type="Reactome" id="R-DME-4641258">
    <property type="pathway name" value="Degradation of DVL"/>
</dbReference>
<dbReference type="Reactome" id="R-DME-5358346">
    <property type="pathway name" value="Hedgehog ligand biogenesis"/>
</dbReference>
<dbReference type="Reactome" id="R-DME-538864">
    <property type="pathway name" value="Degradation of CRY"/>
</dbReference>
<dbReference type="Reactome" id="R-DME-5607761">
    <property type="pathway name" value="Dectin-1 mediated noncanonical NF-kB signaling"/>
</dbReference>
<dbReference type="Reactome" id="R-DME-5607764">
    <property type="pathway name" value="CLEC7A (Dectin-1) signaling"/>
</dbReference>
<dbReference type="Reactome" id="R-DME-5610780">
    <property type="pathway name" value="Degradation of GLI1 by the proteasome"/>
</dbReference>
<dbReference type="Reactome" id="R-DME-5610785">
    <property type="pathway name" value="GLI3 is processed to GLI3R by the proteasome"/>
</dbReference>
<dbReference type="Reactome" id="R-DME-5632684">
    <property type="pathway name" value="Hedgehog 'on' state"/>
</dbReference>
<dbReference type="Reactome" id="R-DME-5658442">
    <property type="pathway name" value="Regulation of RAS by GAPs"/>
</dbReference>
<dbReference type="Reactome" id="R-DME-5676590">
    <property type="pathway name" value="NIK--&gt;noncanonical NF-kB signaling"/>
</dbReference>
<dbReference type="Reactome" id="R-DME-5689603">
    <property type="pathway name" value="UCH proteinases"/>
</dbReference>
<dbReference type="Reactome" id="R-DME-5689880">
    <property type="pathway name" value="Ub-specific processing proteases"/>
</dbReference>
<dbReference type="Reactome" id="R-DME-68949">
    <property type="pathway name" value="Orc1 removal from chromatin"/>
</dbReference>
<dbReference type="Reactome" id="R-DME-69017">
    <property type="pathway name" value="CDK-mediated phosphorylation and removal of Cdc6"/>
</dbReference>
<dbReference type="Reactome" id="R-DME-69601">
    <property type="pathway name" value="Ubiquitin Mediated Degradation of Phosphorylated Cdc25A"/>
</dbReference>
<dbReference type="Reactome" id="R-DME-75815">
    <property type="pathway name" value="Ubiquitin-dependent degradation of Cyclin D"/>
</dbReference>
<dbReference type="Reactome" id="R-DME-8854050">
    <property type="pathway name" value="FBXL7 down-regulates AURKA during mitotic entry and in early mitosis"/>
</dbReference>
<dbReference type="Reactome" id="R-DME-8939236">
    <property type="pathway name" value="RUNX1 regulates transcription of genes involved in differentiation of HSCs"/>
</dbReference>
<dbReference type="Reactome" id="R-DME-8939902">
    <property type="pathway name" value="Regulation of RUNX2 expression and activity"/>
</dbReference>
<dbReference type="Reactome" id="R-DME-8941858">
    <property type="pathway name" value="Regulation of RUNX3 expression and activity"/>
</dbReference>
<dbReference type="Reactome" id="R-DME-8948751">
    <property type="pathway name" value="Regulation of PTEN stability and activity"/>
</dbReference>
<dbReference type="Reactome" id="R-DME-8951664">
    <property type="pathway name" value="Neddylation"/>
</dbReference>
<dbReference type="Reactome" id="R-DME-9020702">
    <property type="pathway name" value="Interleukin-1 signaling"/>
</dbReference>
<dbReference type="Reactome" id="R-DME-9755511">
    <property type="pathway name" value="KEAP1-NFE2L2 pathway"/>
</dbReference>
<dbReference type="Reactome" id="R-DME-9762114">
    <property type="pathway name" value="GSK3B and BTRC:CUL1-mediated-degradation of NFE2L2"/>
</dbReference>
<dbReference type="Reactome" id="R-DME-983168">
    <property type="pathway name" value="Antigen processing: Ubiquitination &amp; Proteasome degradation"/>
</dbReference>
<dbReference type="Reactome" id="R-DME-9907900">
    <property type="pathway name" value="Proteasome assembly"/>
</dbReference>
<dbReference type="SignaLink" id="Q9XZJ4"/>
<dbReference type="PRO" id="PR:Q9XZJ4"/>
<dbReference type="Proteomes" id="UP000000803">
    <property type="component" value="Chromosome 2R"/>
</dbReference>
<dbReference type="Bgee" id="FBgn0050382">
    <property type="expression patterns" value="Expressed in prepupa and 12 other cell types or tissues"/>
</dbReference>
<dbReference type="GO" id="GO:0005829">
    <property type="term" value="C:cytosol"/>
    <property type="evidence" value="ECO:0000304"/>
    <property type="project" value="Reactome"/>
</dbReference>
<dbReference type="GO" id="GO:0005654">
    <property type="term" value="C:nucleoplasm"/>
    <property type="evidence" value="ECO:0000304"/>
    <property type="project" value="Reactome"/>
</dbReference>
<dbReference type="GO" id="GO:0005634">
    <property type="term" value="C:nucleus"/>
    <property type="evidence" value="ECO:0000318"/>
    <property type="project" value="GO_Central"/>
</dbReference>
<dbReference type="GO" id="GO:0000502">
    <property type="term" value="C:proteasome complex"/>
    <property type="evidence" value="ECO:0000314"/>
    <property type="project" value="FlyBase"/>
</dbReference>
<dbReference type="GO" id="GO:0005839">
    <property type="term" value="C:proteasome core complex"/>
    <property type="evidence" value="ECO:0000314"/>
    <property type="project" value="FlyBase"/>
</dbReference>
<dbReference type="GO" id="GO:0019773">
    <property type="term" value="C:proteasome core complex, alpha-subunit complex"/>
    <property type="evidence" value="ECO:0000250"/>
    <property type="project" value="UniProtKB"/>
</dbReference>
<dbReference type="GO" id="GO:0043161">
    <property type="term" value="P:proteasome-mediated ubiquitin-dependent protein catabolic process"/>
    <property type="evidence" value="ECO:0000315"/>
    <property type="project" value="FlyBase"/>
</dbReference>
<dbReference type="CDD" id="cd03754">
    <property type="entry name" value="proteasome_alpha_type_6"/>
    <property type="match status" value="1"/>
</dbReference>
<dbReference type="FunFam" id="3.60.20.10:FF:000101">
    <property type="entry name" value="Proteasome subunit alpha type"/>
    <property type="match status" value="1"/>
</dbReference>
<dbReference type="Gene3D" id="3.60.20.10">
    <property type="entry name" value="Glutamine Phosphoribosylpyrophosphate, subunit 1, domain 1"/>
    <property type="match status" value="1"/>
</dbReference>
<dbReference type="InterPro" id="IPR029055">
    <property type="entry name" value="Ntn_hydrolases_N"/>
</dbReference>
<dbReference type="InterPro" id="IPR050115">
    <property type="entry name" value="Proteasome_alpha"/>
</dbReference>
<dbReference type="InterPro" id="IPR023332">
    <property type="entry name" value="Proteasome_alpha-type"/>
</dbReference>
<dbReference type="InterPro" id="IPR000426">
    <property type="entry name" value="Proteasome_asu_N"/>
</dbReference>
<dbReference type="InterPro" id="IPR001353">
    <property type="entry name" value="Proteasome_sua/b"/>
</dbReference>
<dbReference type="InterPro" id="IPR034642">
    <property type="entry name" value="Proteasome_subunit_alpha6"/>
</dbReference>
<dbReference type="PANTHER" id="PTHR11599">
    <property type="entry name" value="PROTEASOME SUBUNIT ALPHA/BETA"/>
    <property type="match status" value="1"/>
</dbReference>
<dbReference type="Pfam" id="PF00227">
    <property type="entry name" value="Proteasome"/>
    <property type="match status" value="1"/>
</dbReference>
<dbReference type="Pfam" id="PF10584">
    <property type="entry name" value="Proteasome_A_N"/>
    <property type="match status" value="1"/>
</dbReference>
<dbReference type="SMART" id="SM00948">
    <property type="entry name" value="Proteasome_A_N"/>
    <property type="match status" value="1"/>
</dbReference>
<dbReference type="SUPFAM" id="SSF56235">
    <property type="entry name" value="N-terminal nucleophile aminohydrolases (Ntn hydrolases)"/>
    <property type="match status" value="1"/>
</dbReference>
<dbReference type="PROSITE" id="PS00388">
    <property type="entry name" value="PROTEASOME_ALPHA_1"/>
    <property type="match status" value="1"/>
</dbReference>
<dbReference type="PROSITE" id="PS51475">
    <property type="entry name" value="PROTEASOME_ALPHA_2"/>
    <property type="match status" value="1"/>
</dbReference>
<gene>
    <name type="primary">Prosalpha1</name>
    <name type="synonym">Prosalpha6</name>
    <name type="ORF">CG18495</name>
</gene>
<accession>Q9XZJ4</accession>
<accession>Q0E9G1</accession>
<accession>Q9V324</accession>
<sequence length="244" mass="27162">MSRGSSAGFDRHITIFSPEGRLYQVEYAFKAIAQENITTVALKSGDCAVVATQKKVTEKNIVPETVTHLFRITKDIGCAMTGRIADSRSQVQKARYEAANFRYKYGYEMPVDVLCRRIADINQVYTQNAEMRPLGCSMVLIAYDNEIGPSVYKTDPAGYFSGFKACSVGAKTLEANSYLEKKYKPNLSEEKAIQLAISCLSSVLAIDFKPNGIEIGVVSKSDPTFRILDEREIEEHLTKIAEKD</sequence>
<proteinExistence type="evidence at protein level"/>
<keyword id="KW-0963">Cytoplasm</keyword>
<keyword id="KW-0539">Nucleus</keyword>
<keyword id="KW-0647">Proteasome</keyword>
<keyword id="KW-1185">Reference proteome</keyword>
<reference key="1">
    <citation type="submission" date="1999-04" db="EMBL/GenBank/DDBJ databases">
        <title>Drosophila melanogaster 20S proteasome subunit alpha1 cDNA.</title>
        <authorList>
            <person name="Belote J."/>
        </authorList>
    </citation>
    <scope>NUCLEOTIDE SEQUENCE [MRNA]</scope>
</reference>
<reference key="2">
    <citation type="journal article" date="2000" name="Science">
        <title>The genome sequence of Drosophila melanogaster.</title>
        <authorList>
            <person name="Adams M.D."/>
            <person name="Celniker S.E."/>
            <person name="Holt R.A."/>
            <person name="Evans C.A."/>
            <person name="Gocayne J.D."/>
            <person name="Amanatides P.G."/>
            <person name="Scherer S.E."/>
            <person name="Li P.W."/>
            <person name="Hoskins R.A."/>
            <person name="Galle R.F."/>
            <person name="George R.A."/>
            <person name="Lewis S.E."/>
            <person name="Richards S."/>
            <person name="Ashburner M."/>
            <person name="Henderson S.N."/>
            <person name="Sutton G.G."/>
            <person name="Wortman J.R."/>
            <person name="Yandell M.D."/>
            <person name="Zhang Q."/>
            <person name="Chen L.X."/>
            <person name="Brandon R.C."/>
            <person name="Rogers Y.-H.C."/>
            <person name="Blazej R.G."/>
            <person name="Champe M."/>
            <person name="Pfeiffer B.D."/>
            <person name="Wan K.H."/>
            <person name="Doyle C."/>
            <person name="Baxter E.G."/>
            <person name="Helt G."/>
            <person name="Nelson C.R."/>
            <person name="Miklos G.L.G."/>
            <person name="Abril J.F."/>
            <person name="Agbayani A."/>
            <person name="An H.-J."/>
            <person name="Andrews-Pfannkoch C."/>
            <person name="Baldwin D."/>
            <person name="Ballew R.M."/>
            <person name="Basu A."/>
            <person name="Baxendale J."/>
            <person name="Bayraktaroglu L."/>
            <person name="Beasley E.M."/>
            <person name="Beeson K.Y."/>
            <person name="Benos P.V."/>
            <person name="Berman B.P."/>
            <person name="Bhandari D."/>
            <person name="Bolshakov S."/>
            <person name="Borkova D."/>
            <person name="Botchan M.R."/>
            <person name="Bouck J."/>
            <person name="Brokstein P."/>
            <person name="Brottier P."/>
            <person name="Burtis K.C."/>
            <person name="Busam D.A."/>
            <person name="Butler H."/>
            <person name="Cadieu E."/>
            <person name="Center A."/>
            <person name="Chandra I."/>
            <person name="Cherry J.M."/>
            <person name="Cawley S."/>
            <person name="Dahlke C."/>
            <person name="Davenport L.B."/>
            <person name="Davies P."/>
            <person name="de Pablos B."/>
            <person name="Delcher A."/>
            <person name="Deng Z."/>
            <person name="Mays A.D."/>
            <person name="Dew I."/>
            <person name="Dietz S.M."/>
            <person name="Dodson K."/>
            <person name="Doup L.E."/>
            <person name="Downes M."/>
            <person name="Dugan-Rocha S."/>
            <person name="Dunkov B.C."/>
            <person name="Dunn P."/>
            <person name="Durbin K.J."/>
            <person name="Evangelista C.C."/>
            <person name="Ferraz C."/>
            <person name="Ferriera S."/>
            <person name="Fleischmann W."/>
            <person name="Fosler C."/>
            <person name="Gabrielian A.E."/>
            <person name="Garg N.S."/>
            <person name="Gelbart W.M."/>
            <person name="Glasser K."/>
            <person name="Glodek A."/>
            <person name="Gong F."/>
            <person name="Gorrell J.H."/>
            <person name="Gu Z."/>
            <person name="Guan P."/>
            <person name="Harris M."/>
            <person name="Harris N.L."/>
            <person name="Harvey D.A."/>
            <person name="Heiman T.J."/>
            <person name="Hernandez J.R."/>
            <person name="Houck J."/>
            <person name="Hostin D."/>
            <person name="Houston K.A."/>
            <person name="Howland T.J."/>
            <person name="Wei M.-H."/>
            <person name="Ibegwam C."/>
            <person name="Jalali M."/>
            <person name="Kalush F."/>
            <person name="Karpen G.H."/>
            <person name="Ke Z."/>
            <person name="Kennison J.A."/>
            <person name="Ketchum K.A."/>
            <person name="Kimmel B.E."/>
            <person name="Kodira C.D."/>
            <person name="Kraft C.L."/>
            <person name="Kravitz S."/>
            <person name="Kulp D."/>
            <person name="Lai Z."/>
            <person name="Lasko P."/>
            <person name="Lei Y."/>
            <person name="Levitsky A.A."/>
            <person name="Li J.H."/>
            <person name="Li Z."/>
            <person name="Liang Y."/>
            <person name="Lin X."/>
            <person name="Liu X."/>
            <person name="Mattei B."/>
            <person name="McIntosh T.C."/>
            <person name="McLeod M.P."/>
            <person name="McPherson D."/>
            <person name="Merkulov G."/>
            <person name="Milshina N.V."/>
            <person name="Mobarry C."/>
            <person name="Morris J."/>
            <person name="Moshrefi A."/>
            <person name="Mount S.M."/>
            <person name="Moy M."/>
            <person name="Murphy B."/>
            <person name="Murphy L."/>
            <person name="Muzny D.M."/>
            <person name="Nelson D.L."/>
            <person name="Nelson D.R."/>
            <person name="Nelson K.A."/>
            <person name="Nixon K."/>
            <person name="Nusskern D.R."/>
            <person name="Pacleb J.M."/>
            <person name="Palazzolo M."/>
            <person name="Pittman G.S."/>
            <person name="Pan S."/>
            <person name="Pollard J."/>
            <person name="Puri V."/>
            <person name="Reese M.G."/>
            <person name="Reinert K."/>
            <person name="Remington K."/>
            <person name="Saunders R.D.C."/>
            <person name="Scheeler F."/>
            <person name="Shen H."/>
            <person name="Shue B.C."/>
            <person name="Siden-Kiamos I."/>
            <person name="Simpson M."/>
            <person name="Skupski M.P."/>
            <person name="Smith T.J."/>
            <person name="Spier E."/>
            <person name="Spradling A.C."/>
            <person name="Stapleton M."/>
            <person name="Strong R."/>
            <person name="Sun E."/>
            <person name="Svirskas R."/>
            <person name="Tector C."/>
            <person name="Turner R."/>
            <person name="Venter E."/>
            <person name="Wang A.H."/>
            <person name="Wang X."/>
            <person name="Wang Z.-Y."/>
            <person name="Wassarman D.A."/>
            <person name="Weinstock G.M."/>
            <person name="Weissenbach J."/>
            <person name="Williams S.M."/>
            <person name="Woodage T."/>
            <person name="Worley K.C."/>
            <person name="Wu D."/>
            <person name="Yang S."/>
            <person name="Yao Q.A."/>
            <person name="Ye J."/>
            <person name="Yeh R.-F."/>
            <person name="Zaveri J.S."/>
            <person name="Zhan M."/>
            <person name="Zhang G."/>
            <person name="Zhao Q."/>
            <person name="Zheng L."/>
            <person name="Zheng X.H."/>
            <person name="Zhong F.N."/>
            <person name="Zhong W."/>
            <person name="Zhou X."/>
            <person name="Zhu S.C."/>
            <person name="Zhu X."/>
            <person name="Smith H.O."/>
            <person name="Gibbs R.A."/>
            <person name="Myers E.W."/>
            <person name="Rubin G.M."/>
            <person name="Venter J.C."/>
        </authorList>
    </citation>
    <scope>NUCLEOTIDE SEQUENCE [LARGE SCALE GENOMIC DNA]</scope>
    <source>
        <strain>Berkeley</strain>
    </source>
</reference>
<reference key="3">
    <citation type="journal article" date="2002" name="Genome Biol.">
        <title>Annotation of the Drosophila melanogaster euchromatic genome: a systematic review.</title>
        <authorList>
            <person name="Misra S."/>
            <person name="Crosby M.A."/>
            <person name="Mungall C.J."/>
            <person name="Matthews B.B."/>
            <person name="Campbell K.S."/>
            <person name="Hradecky P."/>
            <person name="Huang Y."/>
            <person name="Kaminker J.S."/>
            <person name="Millburn G.H."/>
            <person name="Prochnik S.E."/>
            <person name="Smith C.D."/>
            <person name="Tupy J.L."/>
            <person name="Whitfield E.J."/>
            <person name="Bayraktaroglu L."/>
            <person name="Berman B.P."/>
            <person name="Bettencourt B.R."/>
            <person name="Celniker S.E."/>
            <person name="de Grey A.D.N.J."/>
            <person name="Drysdale R.A."/>
            <person name="Harris N.L."/>
            <person name="Richter J."/>
            <person name="Russo S."/>
            <person name="Schroeder A.J."/>
            <person name="Shu S.Q."/>
            <person name="Stapleton M."/>
            <person name="Yamada C."/>
            <person name="Ashburner M."/>
            <person name="Gelbart W.M."/>
            <person name="Rubin G.M."/>
            <person name="Lewis S.E."/>
        </authorList>
    </citation>
    <scope>GENOME REANNOTATION</scope>
    <source>
        <strain>Berkeley</strain>
    </source>
</reference>
<reference key="4">
    <citation type="submission" date="2003-01" db="EMBL/GenBank/DDBJ databases">
        <authorList>
            <person name="Stapleton M."/>
            <person name="Brokstein P."/>
            <person name="Hong L."/>
            <person name="Agbayani A."/>
            <person name="Carlson J.W."/>
            <person name="Champe M."/>
            <person name="Chavez C."/>
            <person name="Dorsett V."/>
            <person name="Dresnek D."/>
            <person name="Farfan D."/>
            <person name="Frise E."/>
            <person name="George R.A."/>
            <person name="Gonzalez M."/>
            <person name="Guarin H."/>
            <person name="Kronmiller B."/>
            <person name="Li P.W."/>
            <person name="Liao G."/>
            <person name="Miranda A."/>
            <person name="Mungall C.J."/>
            <person name="Nunoo J."/>
            <person name="Pacleb J.M."/>
            <person name="Paragas V."/>
            <person name="Park S."/>
            <person name="Patel S."/>
            <person name="Phouanenavong S."/>
            <person name="Wan K.H."/>
            <person name="Yu C."/>
            <person name="Lewis S.E."/>
            <person name="Rubin G.M."/>
            <person name="Celniker S.E."/>
        </authorList>
    </citation>
    <scope>NUCLEOTIDE SEQUENCE [LARGE SCALE MRNA]</scope>
    <source>
        <strain>Berkeley</strain>
        <tissue>Embryo</tissue>
    </source>
</reference>
<reference key="5">
    <citation type="journal article" date="2013" name="Cell">
        <title>Proteasome regulation by ADP-ribosylation.</title>
        <authorList>
            <person name="Cho-Park P.F."/>
            <person name="Steller H."/>
        </authorList>
    </citation>
    <scope>INTERACTION WITH PI31</scope>
</reference>
<protein>
    <recommendedName>
        <fullName>Proteasome subunit alpha type-6</fullName>
    </recommendedName>
    <alternativeName>
        <fullName>20S proteasome subunit alpha-1</fullName>
    </alternativeName>
</protein>
<evidence type="ECO:0000250" key="1"/>
<evidence type="ECO:0000255" key="2">
    <source>
        <dbReference type="PROSITE-ProRule" id="PRU00808"/>
    </source>
</evidence>
<evidence type="ECO:0000269" key="3">
    <source>
    </source>
</evidence>
<evidence type="ECO:0000305" key="4"/>
<organism>
    <name type="scientific">Drosophila melanogaster</name>
    <name type="common">Fruit fly</name>
    <dbReference type="NCBI Taxonomy" id="7227"/>
    <lineage>
        <taxon>Eukaryota</taxon>
        <taxon>Metazoa</taxon>
        <taxon>Ecdysozoa</taxon>
        <taxon>Arthropoda</taxon>
        <taxon>Hexapoda</taxon>
        <taxon>Insecta</taxon>
        <taxon>Pterygota</taxon>
        <taxon>Neoptera</taxon>
        <taxon>Endopterygota</taxon>
        <taxon>Diptera</taxon>
        <taxon>Brachycera</taxon>
        <taxon>Muscomorpha</taxon>
        <taxon>Ephydroidea</taxon>
        <taxon>Drosophilidae</taxon>
        <taxon>Drosophila</taxon>
        <taxon>Sophophora</taxon>
    </lineage>
</organism>
<comment type="function">
    <text evidence="1">The proteasome is a multicatalytic proteinase complex which is characterized by its ability to cleave peptides with Arg, Phe, Tyr, Leu, and Glu adjacent to the leaving group at neutral or slightly basic pH. The proteasome has an ATP-dependent proteolytic activity (By similarity).</text>
</comment>
<comment type="subunit">
    <text evidence="1 3">The 26S proteasome consists of a 20S proteasome core and two 19S regulatory subunits. The 20S proteasome core is composed of 28 subunits that are arranged in four stacked rings, resulting in a barrel-shaped structure. The two end rings are each formed by seven alpha subunits, and the two central rings are each formed by seven beta subunits. The catalytic chamber with the active sites is on the inside of the barrel (By similarity). Interacts with PI31.</text>
</comment>
<comment type="interaction">
    <interactant intactId="EBI-3416638">
        <id>Q9XZJ4</id>
    </interactant>
    <interactant intactId="EBI-98978">
        <id>P40301</id>
        <label>Prosalpha2</label>
    </interactant>
    <organismsDiffer>false</organismsDiffer>
    <experiments>3</experiments>
</comment>
<comment type="interaction">
    <interactant intactId="EBI-3416638">
        <id>Q9XZJ4</id>
    </interactant>
    <interactant intactId="EBI-93148">
        <id>P22769</id>
        <label>Prosalpha4</label>
    </interactant>
    <organismsDiffer>false</organismsDiffer>
    <experiments>3</experiments>
</comment>
<comment type="subcellular location">
    <subcellularLocation>
        <location evidence="1">Cytoplasm</location>
    </subcellularLocation>
    <subcellularLocation>
        <location evidence="1">Nucleus</location>
    </subcellularLocation>
</comment>
<comment type="similarity">
    <text evidence="2">Belongs to the peptidase T1A family.</text>
</comment>
<feature type="chain" id="PRO_0000124134" description="Proteasome subunit alpha type-6">
    <location>
        <begin position="1"/>
        <end position="244"/>
    </location>
</feature>
<feature type="sequence conflict" description="In Ref. 1; AAD33944." evidence="4" ref="1">
    <original>A</original>
    <variation>G</variation>
    <location>
        <position position="94"/>
    </location>
</feature>
<feature type="sequence conflict" description="In Ref. 1; AAD33944." evidence="4" ref="1">
    <original>N</original>
    <variation>T</variation>
    <location>
        <position position="122"/>
    </location>
</feature>